<comment type="function">
    <text evidence="1">Murein-degrading enzyme that degrades murein glycan strands and insoluble, high-molecular weight murein sacculi, with the concomitant formation of a 1,6-anhydromuramoyl product. Lytic transglycosylases (LTs) play an integral role in the metabolism of the peptidoglycan (PG) sacculus. Their lytic action creates space within the PG sacculus to allow for its expansion as well as for the insertion of various structures such as secretion systems and flagella.</text>
</comment>
<comment type="catalytic activity">
    <reaction evidence="1">
        <text>Exolytic cleavage of the (1-&gt;4)-beta-glycosidic linkage between N-acetylmuramic acid (MurNAc) and N-acetylglucosamine (GlcNAc) residues in peptidoglycan, from either the reducing or the non-reducing ends of the peptidoglycan chains, with concomitant formation of a 1,6-anhydrobond in the MurNAc residue.</text>
        <dbReference type="EC" id="4.2.2.n1"/>
    </reaction>
</comment>
<comment type="subcellular location">
    <subcellularLocation>
        <location>Cell outer membrane</location>
        <topology>Peripheral membrane protein</topology>
    </subcellularLocation>
    <text evidence="1">Attached to the inner leaflet of the outer membrane.</text>
</comment>
<comment type="domain">
    <text evidence="1">The N-terminal domain does not have lytic activity and probably modulates enzymatic activity. The C-terminal domain is the catalytic active domain.</text>
</comment>
<comment type="similarity">
    <text evidence="1">In the N-terminal section; belongs to the bacterial solute-binding protein 3 family.</text>
</comment>
<comment type="similarity">
    <text evidence="1">In the C-terminal section; belongs to the transglycosylase Slt family.</text>
</comment>
<keyword id="KW-0998">Cell outer membrane</keyword>
<keyword id="KW-0961">Cell wall biogenesis/degradation</keyword>
<keyword id="KW-0456">Lyase</keyword>
<keyword id="KW-0472">Membrane</keyword>
<keyword id="KW-1185">Reference proteome</keyword>
<keyword id="KW-0732">Signal</keyword>
<accession>A8FY01</accession>
<reference key="1">
    <citation type="submission" date="2007-08" db="EMBL/GenBank/DDBJ databases">
        <title>Complete sequence of Shewanella sediminis HAW-EB3.</title>
        <authorList>
            <consortium name="US DOE Joint Genome Institute"/>
            <person name="Copeland A."/>
            <person name="Lucas S."/>
            <person name="Lapidus A."/>
            <person name="Barry K."/>
            <person name="Glavina del Rio T."/>
            <person name="Dalin E."/>
            <person name="Tice H."/>
            <person name="Pitluck S."/>
            <person name="Chertkov O."/>
            <person name="Brettin T."/>
            <person name="Bruce D."/>
            <person name="Detter J.C."/>
            <person name="Han C."/>
            <person name="Schmutz J."/>
            <person name="Larimer F."/>
            <person name="Land M."/>
            <person name="Hauser L."/>
            <person name="Kyrpides N."/>
            <person name="Kim E."/>
            <person name="Zhao J.-S."/>
            <person name="Richardson P."/>
        </authorList>
    </citation>
    <scope>NUCLEOTIDE SEQUENCE [LARGE SCALE GENOMIC DNA]</scope>
    <source>
        <strain>HAW-EB3</strain>
    </source>
</reference>
<proteinExistence type="inferred from homology"/>
<sequence>MKKLLFVLLTITLLASCQKVSVEQTKVIPEPIKKTTLNVGTLYGAQIFVTTGQGEAGFDFEMASRFAEYLKLELKMKPYSNISELYQALESGEVDLLAAGLADTPTRREKFRLGPPLYRVNQVLVYKQGTPIPKDVSTLEDNITVITDSSFVETLSQLQKLYPELVWEQEKEKDSEELMAMIARGEITYTIADSSTFEINRRYLPELRAGPILKEKQAIVWLLPPKNSDQLMSDLLTFWHYEKRSGTLAHLNEKYFAHVKRFDYVDTRAFLRAIDNKLPKYKESFQHYANGIDWRKLAATAYQESHWNPNARSPTGVRGLMMLTLPTAKQVGIKNRLDPIQSIKGGAKYLNDILNRLPDSIPENQRMWFALASYNIGYGHVEDARKLAQSMGLNPSAWRDLKEVLPLLHKRKYYQRTRYGYARGNEAVHYVDSIRRYYDTLVWVDNQNQLLIDEKASAEESQLAEKIGGKQENLSGAQPQ</sequence>
<organism>
    <name type="scientific">Shewanella sediminis (strain HAW-EB3)</name>
    <dbReference type="NCBI Taxonomy" id="425104"/>
    <lineage>
        <taxon>Bacteria</taxon>
        <taxon>Pseudomonadati</taxon>
        <taxon>Pseudomonadota</taxon>
        <taxon>Gammaproteobacteria</taxon>
        <taxon>Alteromonadales</taxon>
        <taxon>Shewanellaceae</taxon>
        <taxon>Shewanella</taxon>
    </lineage>
</organism>
<gene>
    <name evidence="1" type="primary">mltF</name>
    <name type="ordered locus">Ssed_3120</name>
</gene>
<dbReference type="EC" id="4.2.2.n1" evidence="1"/>
<dbReference type="EMBL" id="CP000821">
    <property type="protein sequence ID" value="ABV37724.1"/>
    <property type="molecule type" value="Genomic_DNA"/>
</dbReference>
<dbReference type="RefSeq" id="WP_012143454.1">
    <property type="nucleotide sequence ID" value="NC_009831.1"/>
</dbReference>
<dbReference type="SMR" id="A8FY01"/>
<dbReference type="STRING" id="425104.Ssed_3120"/>
<dbReference type="CAZy" id="GH23">
    <property type="family name" value="Glycoside Hydrolase Family 23"/>
</dbReference>
<dbReference type="KEGG" id="sse:Ssed_3120"/>
<dbReference type="eggNOG" id="COG4623">
    <property type="taxonomic scope" value="Bacteria"/>
</dbReference>
<dbReference type="HOGENOM" id="CLU_027494_0_1_6"/>
<dbReference type="OrthoDB" id="9815002at2"/>
<dbReference type="Proteomes" id="UP000002015">
    <property type="component" value="Chromosome"/>
</dbReference>
<dbReference type="GO" id="GO:0009279">
    <property type="term" value="C:cell outer membrane"/>
    <property type="evidence" value="ECO:0007669"/>
    <property type="project" value="UniProtKB-SubCell"/>
</dbReference>
<dbReference type="GO" id="GO:0008933">
    <property type="term" value="F:peptidoglycan lytic transglycosylase activity"/>
    <property type="evidence" value="ECO:0007669"/>
    <property type="project" value="UniProtKB-UniRule"/>
</dbReference>
<dbReference type="GO" id="GO:0016998">
    <property type="term" value="P:cell wall macromolecule catabolic process"/>
    <property type="evidence" value="ECO:0007669"/>
    <property type="project" value="UniProtKB-UniRule"/>
</dbReference>
<dbReference type="GO" id="GO:0071555">
    <property type="term" value="P:cell wall organization"/>
    <property type="evidence" value="ECO:0007669"/>
    <property type="project" value="UniProtKB-KW"/>
</dbReference>
<dbReference type="GO" id="GO:0009253">
    <property type="term" value="P:peptidoglycan catabolic process"/>
    <property type="evidence" value="ECO:0007669"/>
    <property type="project" value="TreeGrafter"/>
</dbReference>
<dbReference type="CDD" id="cd13403">
    <property type="entry name" value="MLTF-like"/>
    <property type="match status" value="1"/>
</dbReference>
<dbReference type="CDD" id="cd01009">
    <property type="entry name" value="PBP2_YfhD_N"/>
    <property type="match status" value="1"/>
</dbReference>
<dbReference type="FunFam" id="1.10.530.10:FF:000003">
    <property type="entry name" value="Membrane-bound lytic murein transglycosylase F"/>
    <property type="match status" value="1"/>
</dbReference>
<dbReference type="Gene3D" id="1.10.530.10">
    <property type="match status" value="1"/>
</dbReference>
<dbReference type="Gene3D" id="3.40.190.10">
    <property type="entry name" value="Periplasmic binding protein-like II"/>
    <property type="match status" value="2"/>
</dbReference>
<dbReference type="HAMAP" id="MF_02016">
    <property type="entry name" value="MltF"/>
    <property type="match status" value="1"/>
</dbReference>
<dbReference type="InterPro" id="IPR023346">
    <property type="entry name" value="Lysozyme-like_dom_sf"/>
</dbReference>
<dbReference type="InterPro" id="IPR023703">
    <property type="entry name" value="MltF"/>
</dbReference>
<dbReference type="InterPro" id="IPR001638">
    <property type="entry name" value="Solute-binding_3/MltF_N"/>
</dbReference>
<dbReference type="InterPro" id="IPR008258">
    <property type="entry name" value="Transglycosylase_SLT_dom_1"/>
</dbReference>
<dbReference type="NCBIfam" id="NF008112">
    <property type="entry name" value="PRK10859.1"/>
    <property type="match status" value="1"/>
</dbReference>
<dbReference type="PANTHER" id="PTHR35936">
    <property type="entry name" value="MEMBRANE-BOUND LYTIC MUREIN TRANSGLYCOSYLASE F"/>
    <property type="match status" value="1"/>
</dbReference>
<dbReference type="PANTHER" id="PTHR35936:SF32">
    <property type="entry name" value="MEMBRANE-BOUND LYTIC MUREIN TRANSGLYCOSYLASE F"/>
    <property type="match status" value="1"/>
</dbReference>
<dbReference type="Pfam" id="PF00497">
    <property type="entry name" value="SBP_bac_3"/>
    <property type="match status" value="1"/>
</dbReference>
<dbReference type="Pfam" id="PF01464">
    <property type="entry name" value="SLT"/>
    <property type="match status" value="1"/>
</dbReference>
<dbReference type="SMART" id="SM00062">
    <property type="entry name" value="PBPb"/>
    <property type="match status" value="1"/>
</dbReference>
<dbReference type="SUPFAM" id="SSF53955">
    <property type="entry name" value="Lysozyme-like"/>
    <property type="match status" value="1"/>
</dbReference>
<dbReference type="SUPFAM" id="SSF53850">
    <property type="entry name" value="Periplasmic binding protein-like II"/>
    <property type="match status" value="1"/>
</dbReference>
<dbReference type="PROSITE" id="PS51257">
    <property type="entry name" value="PROKAR_LIPOPROTEIN"/>
    <property type="match status" value="1"/>
</dbReference>
<protein>
    <recommendedName>
        <fullName evidence="1">Membrane-bound lytic murein transglycosylase F</fullName>
        <ecNumber evidence="1">4.2.2.n1</ecNumber>
    </recommendedName>
    <alternativeName>
        <fullName evidence="1">Murein lyase F</fullName>
    </alternativeName>
</protein>
<name>MLTF_SHESH</name>
<feature type="signal peptide" evidence="1">
    <location>
        <begin position="1"/>
        <end position="15"/>
    </location>
</feature>
<feature type="chain" id="PRO_5000278524" description="Membrane-bound lytic murein transglycosylase F">
    <location>
        <begin position="16"/>
        <end position="480"/>
    </location>
</feature>
<feature type="region of interest" description="Non-LT domain" evidence="1">
    <location>
        <begin position="16"/>
        <end position="259"/>
    </location>
</feature>
<feature type="region of interest" description="LT domain" evidence="1">
    <location>
        <begin position="260"/>
        <end position="480"/>
    </location>
</feature>
<feature type="active site" evidence="1">
    <location>
        <position position="304"/>
    </location>
</feature>
<evidence type="ECO:0000255" key="1">
    <source>
        <dbReference type="HAMAP-Rule" id="MF_02016"/>
    </source>
</evidence>